<proteinExistence type="inferred from homology"/>
<accession>Q8Z7A9</accession>
<keyword id="KW-0997">Cell inner membrane</keyword>
<keyword id="KW-1003">Cell membrane</keyword>
<keyword id="KW-0472">Membrane</keyword>
<keyword id="KW-0812">Transmembrane</keyword>
<keyword id="KW-1133">Transmembrane helix</keyword>
<protein>
    <recommendedName>
        <fullName>UPF0283 membrane protein YcjF</fullName>
    </recommendedName>
</protein>
<sequence length="353" mass="39288">MSEPLKPRIDFAEPLKEEPTSAFKAQQTFSEAESHTFAPAAIDERPEDEGVAEAAVDAALRPKRSLWRKMVMGGLALFGASVVGQGVQWTMNAWQTQDWVALGGCAAGALIVGAGVGSVVTEWWRLWRLRQRAHERDEARELLHSHSVVKGRAFCEKLAQQAGIDQSHPALQRWYAAIHETQNDREIVGLYAHLVQPVLDAQARREISRFAAESTLMIAVSPLALVDMAFIAWRNLRLINRIATLYGIELGYYSRLRLFRLVLLNIAFAGASELVREVGMDWMSQDLAARLSTRAAQGIGAGLLTARLGIKAMELCRPLPWADNDKPRLGDFRRQLIGQLKETLQKSKSSPEK</sequence>
<feature type="chain" id="PRO_0000214183" description="UPF0283 membrane protein YcjF">
    <location>
        <begin position="1"/>
        <end position="353"/>
    </location>
</feature>
<feature type="topological domain" description="Periplasmic" evidence="2">
    <location>
        <begin position="1"/>
        <end position="69"/>
    </location>
</feature>
<feature type="transmembrane region" description="Helical" evidence="2">
    <location>
        <begin position="70"/>
        <end position="90"/>
    </location>
</feature>
<feature type="topological domain" description="Cytoplasmic" evidence="2">
    <location>
        <begin position="91"/>
        <end position="99"/>
    </location>
</feature>
<feature type="transmembrane region" description="Helical" evidence="2">
    <location>
        <begin position="100"/>
        <end position="120"/>
    </location>
</feature>
<feature type="topological domain" description="Periplasmic" evidence="2">
    <location>
        <begin position="121"/>
        <end position="212"/>
    </location>
</feature>
<feature type="transmembrane region" description="Helical" evidence="2">
    <location>
        <begin position="213"/>
        <end position="233"/>
    </location>
</feature>
<feature type="topological domain" description="Cytoplasmic" evidence="2">
    <location>
        <begin position="234"/>
        <end position="353"/>
    </location>
</feature>
<feature type="region of interest" description="Disordered" evidence="3">
    <location>
        <begin position="1"/>
        <end position="48"/>
    </location>
</feature>
<feature type="compositionally biased region" description="Basic and acidic residues" evidence="3">
    <location>
        <begin position="1"/>
        <end position="19"/>
    </location>
</feature>
<dbReference type="EMBL" id="AL513382">
    <property type="protein sequence ID" value="CAD01645.1"/>
    <property type="molecule type" value="Genomic_DNA"/>
</dbReference>
<dbReference type="EMBL" id="AE014613">
    <property type="protein sequence ID" value="AAO69220.1"/>
    <property type="molecule type" value="Genomic_DNA"/>
</dbReference>
<dbReference type="RefSeq" id="NP_455819.1">
    <property type="nucleotide sequence ID" value="NC_003198.1"/>
</dbReference>
<dbReference type="RefSeq" id="WP_001294457.1">
    <property type="nucleotide sequence ID" value="NZ_WSUR01000006.1"/>
</dbReference>
<dbReference type="SMR" id="Q8Z7A9"/>
<dbReference type="STRING" id="220341.gene:17585335"/>
<dbReference type="KEGG" id="stt:t1589"/>
<dbReference type="KEGG" id="sty:STY1377"/>
<dbReference type="PATRIC" id="fig|220341.7.peg.1386"/>
<dbReference type="eggNOG" id="COG3768">
    <property type="taxonomic scope" value="Bacteria"/>
</dbReference>
<dbReference type="HOGENOM" id="CLU_057693_2_0_6"/>
<dbReference type="OMA" id="MFFIAWR"/>
<dbReference type="OrthoDB" id="958025at2"/>
<dbReference type="Proteomes" id="UP000000541">
    <property type="component" value="Chromosome"/>
</dbReference>
<dbReference type="Proteomes" id="UP000002670">
    <property type="component" value="Chromosome"/>
</dbReference>
<dbReference type="GO" id="GO:0005886">
    <property type="term" value="C:plasma membrane"/>
    <property type="evidence" value="ECO:0007669"/>
    <property type="project" value="UniProtKB-SubCell"/>
</dbReference>
<dbReference type="HAMAP" id="MF_01085">
    <property type="entry name" value="UPF0283"/>
    <property type="match status" value="1"/>
</dbReference>
<dbReference type="InterPro" id="IPR021147">
    <property type="entry name" value="DUF697"/>
</dbReference>
<dbReference type="InterPro" id="IPR006507">
    <property type="entry name" value="UPF0283"/>
</dbReference>
<dbReference type="NCBIfam" id="TIGR01620">
    <property type="entry name" value="hyp_HI0043"/>
    <property type="match status" value="1"/>
</dbReference>
<dbReference type="PANTHER" id="PTHR39342">
    <property type="entry name" value="UPF0283 MEMBRANE PROTEIN YCJF"/>
    <property type="match status" value="1"/>
</dbReference>
<dbReference type="PANTHER" id="PTHR39342:SF1">
    <property type="entry name" value="UPF0283 MEMBRANE PROTEIN YCJF"/>
    <property type="match status" value="1"/>
</dbReference>
<dbReference type="Pfam" id="PF05128">
    <property type="entry name" value="DUF697"/>
    <property type="match status" value="1"/>
</dbReference>
<comment type="subcellular location">
    <subcellularLocation>
        <location evidence="1">Cell inner membrane</location>
        <topology evidence="1">Multi-pass membrane protein</topology>
    </subcellularLocation>
</comment>
<comment type="similarity">
    <text evidence="4">Belongs to the UPF0283 family.</text>
</comment>
<gene>
    <name type="primary">ycjF</name>
    <name type="ordered locus">STY1377</name>
    <name type="ordered locus">t1589</name>
</gene>
<evidence type="ECO:0000250" key="1"/>
<evidence type="ECO:0000255" key="2"/>
<evidence type="ECO:0000256" key="3">
    <source>
        <dbReference type="SAM" id="MobiDB-lite"/>
    </source>
</evidence>
<evidence type="ECO:0000305" key="4"/>
<reference key="1">
    <citation type="journal article" date="2001" name="Nature">
        <title>Complete genome sequence of a multiple drug resistant Salmonella enterica serovar Typhi CT18.</title>
        <authorList>
            <person name="Parkhill J."/>
            <person name="Dougan G."/>
            <person name="James K.D."/>
            <person name="Thomson N.R."/>
            <person name="Pickard D."/>
            <person name="Wain J."/>
            <person name="Churcher C.M."/>
            <person name="Mungall K.L."/>
            <person name="Bentley S.D."/>
            <person name="Holden M.T.G."/>
            <person name="Sebaihia M."/>
            <person name="Baker S."/>
            <person name="Basham D."/>
            <person name="Brooks K."/>
            <person name="Chillingworth T."/>
            <person name="Connerton P."/>
            <person name="Cronin A."/>
            <person name="Davis P."/>
            <person name="Davies R.M."/>
            <person name="Dowd L."/>
            <person name="White N."/>
            <person name="Farrar J."/>
            <person name="Feltwell T."/>
            <person name="Hamlin N."/>
            <person name="Haque A."/>
            <person name="Hien T.T."/>
            <person name="Holroyd S."/>
            <person name="Jagels K."/>
            <person name="Krogh A."/>
            <person name="Larsen T.S."/>
            <person name="Leather S."/>
            <person name="Moule S."/>
            <person name="O'Gaora P."/>
            <person name="Parry C."/>
            <person name="Quail M.A."/>
            <person name="Rutherford K.M."/>
            <person name="Simmonds M."/>
            <person name="Skelton J."/>
            <person name="Stevens K."/>
            <person name="Whitehead S."/>
            <person name="Barrell B.G."/>
        </authorList>
    </citation>
    <scope>NUCLEOTIDE SEQUENCE [LARGE SCALE GENOMIC DNA]</scope>
    <source>
        <strain>CT18</strain>
    </source>
</reference>
<reference key="2">
    <citation type="journal article" date="2003" name="J. Bacteriol.">
        <title>Comparative genomics of Salmonella enterica serovar Typhi strains Ty2 and CT18.</title>
        <authorList>
            <person name="Deng W."/>
            <person name="Liou S.-R."/>
            <person name="Plunkett G. III"/>
            <person name="Mayhew G.F."/>
            <person name="Rose D.J."/>
            <person name="Burland V."/>
            <person name="Kodoyianni V."/>
            <person name="Schwartz D.C."/>
            <person name="Blattner F.R."/>
        </authorList>
    </citation>
    <scope>NUCLEOTIDE SEQUENCE [LARGE SCALE GENOMIC DNA]</scope>
    <source>
        <strain>ATCC 700931 / Ty2</strain>
    </source>
</reference>
<name>YCJF_SALTI</name>
<organism>
    <name type="scientific">Salmonella typhi</name>
    <dbReference type="NCBI Taxonomy" id="90370"/>
    <lineage>
        <taxon>Bacteria</taxon>
        <taxon>Pseudomonadati</taxon>
        <taxon>Pseudomonadota</taxon>
        <taxon>Gammaproteobacteria</taxon>
        <taxon>Enterobacterales</taxon>
        <taxon>Enterobacteriaceae</taxon>
        <taxon>Salmonella</taxon>
    </lineage>
</organism>